<sequence length="459" mass="50274">MNESVPDSVEDNGNSVPANGLLVLPDNDHEEGGVGSPQRSNSVESPGGSVHSTRKGFGLKKWRRIKRDGPVRDEAAPVDDGSKLLKRGLAGLVNPPSKHVEFSSVEARQSSEGSVGSVNMVHHPGVANGFSPDIGCMFAVGQAFEKSEEHSGNTIGGKNVVGGKVVSGSQEKLWSDTIKRASEERGDIEKEKPCSSLDSDLRSSDFVFSTGSVSVGNHGEKDERLTMNYIGGFSNEGQVKEEVQTYSRSENGNKEDDGESKKNNNHWADKDALADSIRSFAVLQEVLWKEVQSFQELGKESVLLHSNTDELSSDQPSHQNCKEDNSTSSGSKALILKEKVKLLEHKLEEARAALEAKEARIQELENSKIESELECIFQRKIETEIEHLMLTRSLSSLQVLQETKKLHSLKEDPVSNRGNILGKTCKLGFYILTQLILLVSILRFLVLQFSPASRLVIPT</sequence>
<evidence type="ECO:0000250" key="1"/>
<evidence type="ECO:0000255" key="2"/>
<evidence type="ECO:0000256" key="3">
    <source>
        <dbReference type="SAM" id="MobiDB-lite"/>
    </source>
</evidence>
<evidence type="ECO:0000269" key="4">
    <source>
    </source>
</evidence>
<evidence type="ECO:0000269" key="5">
    <source>
    </source>
</evidence>
<evidence type="ECO:0000269" key="6">
    <source>
    </source>
</evidence>
<evidence type="ECO:0000305" key="7"/>
<keyword id="KW-0175">Coiled coil</keyword>
<keyword id="KW-0472">Membrane</keyword>
<keyword id="KW-0539">Nucleus</keyword>
<keyword id="KW-1185">Reference proteome</keyword>
<keyword id="KW-0812">Transmembrane</keyword>
<keyword id="KW-1133">Transmembrane helix</keyword>
<comment type="function">
    <text evidence="4 6">Mediates and enhances the nuclear envelope docking of RANGAP proteins mediated by WIT1 and WIT2 in the undifferentiated cells of root tips (PubMed:17600715). As component of the SUN-WIP-WIT2-KAKU1 complex, mediates the transfer of cytoplasmic forces to the nuclear envelope (NE), leading to nuclear shape changes (PubMed:25759303).</text>
</comment>
<comment type="subunit">
    <text evidence="1 4 5 6">Component of Ran complexes at least composed of WIT1 or WIT2, RANGAP1 or RANGAP2, and WIP1 or WIP2 or WIP3 (By similarity). Interacts with RANGAP1, WPP1/MAF1, and WPP2/MAF2 (PubMed:17600715). Interacts with SUN1 and SUN2 (PubMed:22270916). Core component of the LINC complex which is composed of inner nuclear membrane SUN domain-containing proteins coupled to outer nuclear membrane WIP and WIT proteins. The LINC complex also involves nucleoskeletal proteins CRWN/LINC and possibly KAKU4 and the cytoskeletal myosin KAKU1 (PubMed:25759303). Interacts with WIT2 (PubMed:25759303).</text>
</comment>
<comment type="subcellular location">
    <subcellularLocation>
        <location evidence="4 5">Nucleus envelope</location>
    </subcellularLocation>
    <subcellularLocation>
        <location evidence="4">Nucleus membrane</location>
        <topology evidence="4">Single-pass membrane protein</topology>
        <orientation evidence="4">Cytoplasmic side</orientation>
    </subcellularLocation>
</comment>
<comment type="tissue specificity">
    <text evidence="4">Expressed in seedlings, roots, stems, leaves, and flowers.</text>
</comment>
<comment type="developmental stage">
    <text evidence="4">First observed in roots and cotyledons of young developing seedlings. Later confined to root tips and cauline leaves tips. In flowers, detected in the stamens and at the senescence region of developing siliques.</text>
</comment>
<comment type="domain">
    <text evidence="7">The KASH domain, which contains a transmembrane domain, mediates the nuclear envelope targeting and is involved in the binding to the SUN proteins.</text>
</comment>
<comment type="sequence caution" evidence="7">
    <conflict type="erroneous gene model prediction">
        <sequence resource="EMBL-CDS" id="BAB02805"/>
    </conflict>
</comment>
<name>WIP3_ARATH</name>
<dbReference type="EMBL" id="AB024034">
    <property type="protein sequence ID" value="BAB02805.1"/>
    <property type="status" value="ALT_SEQ"/>
    <property type="molecule type" value="Genomic_DNA"/>
</dbReference>
<dbReference type="EMBL" id="CP002686">
    <property type="protein sequence ID" value="AEE75338.1"/>
    <property type="molecule type" value="Genomic_DNA"/>
</dbReference>
<dbReference type="EMBL" id="AY045697">
    <property type="protein sequence ID" value="AAK74055.1"/>
    <property type="molecule type" value="mRNA"/>
</dbReference>
<dbReference type="EMBL" id="AY149963">
    <property type="protein sequence ID" value="AAN31117.1"/>
    <property type="molecule type" value="mRNA"/>
</dbReference>
<dbReference type="RefSeq" id="NP_566455.1">
    <property type="nucleotide sequence ID" value="NM_112181.5"/>
</dbReference>
<dbReference type="SMR" id="Q94AV5"/>
<dbReference type="BioGRID" id="5870">
    <property type="interactions" value="2"/>
</dbReference>
<dbReference type="FunCoup" id="Q94AV5">
    <property type="interactions" value="21"/>
</dbReference>
<dbReference type="IntAct" id="Q94AV5">
    <property type="interactions" value="4"/>
</dbReference>
<dbReference type="STRING" id="3702.Q94AV5"/>
<dbReference type="iPTMnet" id="Q94AV5"/>
<dbReference type="PaxDb" id="3702-AT3G13360.1"/>
<dbReference type="ProteomicsDB" id="242643"/>
<dbReference type="EnsemblPlants" id="AT3G13360.1">
    <property type="protein sequence ID" value="AT3G13360.1"/>
    <property type="gene ID" value="AT3G13360"/>
</dbReference>
<dbReference type="GeneID" id="820536"/>
<dbReference type="Gramene" id="AT3G13360.1">
    <property type="protein sequence ID" value="AT3G13360.1"/>
    <property type="gene ID" value="AT3G13360"/>
</dbReference>
<dbReference type="KEGG" id="ath:AT3G13360"/>
<dbReference type="Araport" id="AT3G13360"/>
<dbReference type="TAIR" id="AT3G13360">
    <property type="gene designation" value="WIP3"/>
</dbReference>
<dbReference type="eggNOG" id="ENOG502QTZN">
    <property type="taxonomic scope" value="Eukaryota"/>
</dbReference>
<dbReference type="HOGENOM" id="CLU_057777_0_0_1"/>
<dbReference type="InParanoid" id="Q94AV5"/>
<dbReference type="OMA" id="HENCRED"/>
<dbReference type="PhylomeDB" id="Q94AV5"/>
<dbReference type="PRO" id="PR:Q94AV5"/>
<dbReference type="Proteomes" id="UP000006548">
    <property type="component" value="Chromosome 3"/>
</dbReference>
<dbReference type="ExpressionAtlas" id="Q94AV5">
    <property type="expression patterns" value="baseline and differential"/>
</dbReference>
<dbReference type="GO" id="GO:0005635">
    <property type="term" value="C:nuclear envelope"/>
    <property type="evidence" value="ECO:0000314"/>
    <property type="project" value="UniProtKB"/>
</dbReference>
<dbReference type="GO" id="GO:0031965">
    <property type="term" value="C:nuclear membrane"/>
    <property type="evidence" value="ECO:0007669"/>
    <property type="project" value="UniProtKB-SubCell"/>
</dbReference>
<dbReference type="GO" id="GO:0006997">
    <property type="term" value="P:nucleus organization"/>
    <property type="evidence" value="ECO:0000316"/>
    <property type="project" value="TAIR"/>
</dbReference>
<dbReference type="InterPro" id="IPR044696">
    <property type="entry name" value="WIP1/2/3"/>
</dbReference>
<dbReference type="PANTHER" id="PTHR34562">
    <property type="entry name" value="WPP DOMAIN-INTERACTING PROTEIN 2"/>
    <property type="match status" value="1"/>
</dbReference>
<dbReference type="PANTHER" id="PTHR34562:SF9">
    <property type="entry name" value="WPP DOMAIN-INTERACTING PROTEIN 3"/>
    <property type="match status" value="1"/>
</dbReference>
<accession>Q94AV5</accession>
<accession>Q9LTT2</accession>
<gene>
    <name type="primary">WIP3</name>
    <name type="ordered locus">At3g13360</name>
    <name type="ORF">MDC11.15</name>
</gene>
<proteinExistence type="evidence at protein level"/>
<feature type="chain" id="PRO_0000347198" description="WPP domain-interacting protein 3">
    <location>
        <begin position="1"/>
        <end position="459"/>
    </location>
</feature>
<feature type="transmembrane region" description="Helical" evidence="2">
    <location>
        <begin position="427"/>
        <end position="447"/>
    </location>
</feature>
<feature type="domain" description="KASH" evidence="7">
    <location>
        <begin position="426"/>
        <end position="459"/>
    </location>
</feature>
<feature type="region of interest" description="Disordered" evidence="3">
    <location>
        <begin position="1"/>
        <end position="78"/>
    </location>
</feature>
<feature type="region of interest" description="Disordered" evidence="3">
    <location>
        <begin position="240"/>
        <end position="266"/>
    </location>
</feature>
<feature type="region of interest" description="Disordered" evidence="3">
    <location>
        <begin position="308"/>
        <end position="330"/>
    </location>
</feature>
<feature type="coiled-coil region" evidence="2">
    <location>
        <begin position="331"/>
        <end position="375"/>
    </location>
</feature>
<feature type="short sequence motif" description="Nuclear localization signal 1" evidence="1">
    <location>
        <begin position="60"/>
        <end position="61"/>
    </location>
</feature>
<feature type="short sequence motif" description="Nuclear localization signal 2" evidence="1">
    <location>
        <begin position="63"/>
        <end position="64"/>
    </location>
</feature>
<feature type="short sequence motif" description="Nuclear localization signal 3" evidence="1">
    <location>
        <begin position="86"/>
        <end position="87"/>
    </location>
</feature>
<feature type="compositionally biased region" description="Polar residues" evidence="3">
    <location>
        <begin position="1"/>
        <end position="17"/>
    </location>
</feature>
<feature type="compositionally biased region" description="Basic residues" evidence="3">
    <location>
        <begin position="52"/>
        <end position="66"/>
    </location>
</feature>
<feature type="compositionally biased region" description="Basic and acidic residues" evidence="3">
    <location>
        <begin position="67"/>
        <end position="78"/>
    </location>
</feature>
<feature type="compositionally biased region" description="Basic and acidic residues" evidence="3">
    <location>
        <begin position="251"/>
        <end position="266"/>
    </location>
</feature>
<feature type="compositionally biased region" description="Polar residues" evidence="3">
    <location>
        <begin position="308"/>
        <end position="319"/>
    </location>
</feature>
<organism>
    <name type="scientific">Arabidopsis thaliana</name>
    <name type="common">Mouse-ear cress</name>
    <dbReference type="NCBI Taxonomy" id="3702"/>
    <lineage>
        <taxon>Eukaryota</taxon>
        <taxon>Viridiplantae</taxon>
        <taxon>Streptophyta</taxon>
        <taxon>Embryophyta</taxon>
        <taxon>Tracheophyta</taxon>
        <taxon>Spermatophyta</taxon>
        <taxon>Magnoliopsida</taxon>
        <taxon>eudicotyledons</taxon>
        <taxon>Gunneridae</taxon>
        <taxon>Pentapetalae</taxon>
        <taxon>rosids</taxon>
        <taxon>malvids</taxon>
        <taxon>Brassicales</taxon>
        <taxon>Brassicaceae</taxon>
        <taxon>Camelineae</taxon>
        <taxon>Arabidopsis</taxon>
    </lineage>
</organism>
<protein>
    <recommendedName>
        <fullName>WPP domain-interacting protein 3</fullName>
    </recommendedName>
</protein>
<reference key="1">
    <citation type="journal article" date="2000" name="DNA Res.">
        <title>Structural analysis of Arabidopsis thaliana chromosome 3. I. Sequence features of the regions of 4,504,864 bp covered by sixty P1 and TAC clones.</title>
        <authorList>
            <person name="Sato S."/>
            <person name="Nakamura Y."/>
            <person name="Kaneko T."/>
            <person name="Katoh T."/>
            <person name="Asamizu E."/>
            <person name="Tabata S."/>
        </authorList>
    </citation>
    <scope>NUCLEOTIDE SEQUENCE [LARGE SCALE GENOMIC DNA]</scope>
    <source>
        <strain>cv. Columbia</strain>
    </source>
</reference>
<reference key="2">
    <citation type="journal article" date="2017" name="Plant J.">
        <title>Araport11: a complete reannotation of the Arabidopsis thaliana reference genome.</title>
        <authorList>
            <person name="Cheng C.Y."/>
            <person name="Krishnakumar V."/>
            <person name="Chan A.P."/>
            <person name="Thibaud-Nissen F."/>
            <person name="Schobel S."/>
            <person name="Town C.D."/>
        </authorList>
    </citation>
    <scope>GENOME REANNOTATION</scope>
    <source>
        <strain>cv. Columbia</strain>
    </source>
</reference>
<reference key="3">
    <citation type="journal article" date="2003" name="Science">
        <title>Empirical analysis of transcriptional activity in the Arabidopsis genome.</title>
        <authorList>
            <person name="Yamada K."/>
            <person name="Lim J."/>
            <person name="Dale J.M."/>
            <person name="Chen H."/>
            <person name="Shinn P."/>
            <person name="Palm C.J."/>
            <person name="Southwick A.M."/>
            <person name="Wu H.C."/>
            <person name="Kim C.J."/>
            <person name="Nguyen M."/>
            <person name="Pham P.K."/>
            <person name="Cheuk R.F."/>
            <person name="Karlin-Newmann G."/>
            <person name="Liu S.X."/>
            <person name="Lam B."/>
            <person name="Sakano H."/>
            <person name="Wu T."/>
            <person name="Yu G."/>
            <person name="Miranda M."/>
            <person name="Quach H.L."/>
            <person name="Tripp M."/>
            <person name="Chang C.H."/>
            <person name="Lee J.M."/>
            <person name="Toriumi M.J."/>
            <person name="Chan M.M."/>
            <person name="Tang C.C."/>
            <person name="Onodera C.S."/>
            <person name="Deng J.M."/>
            <person name="Akiyama K."/>
            <person name="Ansari Y."/>
            <person name="Arakawa T."/>
            <person name="Banh J."/>
            <person name="Banno F."/>
            <person name="Bowser L."/>
            <person name="Brooks S.Y."/>
            <person name="Carninci P."/>
            <person name="Chao Q."/>
            <person name="Choy N."/>
            <person name="Enju A."/>
            <person name="Goldsmith A.D."/>
            <person name="Gurjal M."/>
            <person name="Hansen N.F."/>
            <person name="Hayashizaki Y."/>
            <person name="Johnson-Hopson C."/>
            <person name="Hsuan V.W."/>
            <person name="Iida K."/>
            <person name="Karnes M."/>
            <person name="Khan S."/>
            <person name="Koesema E."/>
            <person name="Ishida J."/>
            <person name="Jiang P.X."/>
            <person name="Jones T."/>
            <person name="Kawai J."/>
            <person name="Kamiya A."/>
            <person name="Meyers C."/>
            <person name="Nakajima M."/>
            <person name="Narusaka M."/>
            <person name="Seki M."/>
            <person name="Sakurai T."/>
            <person name="Satou M."/>
            <person name="Tamse R."/>
            <person name="Vaysberg M."/>
            <person name="Wallender E.K."/>
            <person name="Wong C."/>
            <person name="Yamamura Y."/>
            <person name="Yuan S."/>
            <person name="Shinozaki K."/>
            <person name="Davis R.W."/>
            <person name="Theologis A."/>
            <person name="Ecker J.R."/>
        </authorList>
    </citation>
    <scope>NUCLEOTIDE SEQUENCE [LARGE SCALE MRNA]</scope>
    <source>
        <strain>cv. Columbia</strain>
    </source>
</reference>
<reference key="4">
    <citation type="journal article" date="2007" name="Curr. Biol.">
        <title>Anchorage of plant RanGAP to the nuclear envelope involves novel nuclear-pore-associated proteins.</title>
        <authorList>
            <person name="Xu X.M."/>
            <person name="Meulia T."/>
            <person name="Meier I."/>
        </authorList>
    </citation>
    <scope>FUNCTION</scope>
    <scope>TISSUE SPECIFICITY</scope>
    <scope>DEVELOPMENTAL STAGE</scope>
    <scope>SUBCELLULAR LOCATION</scope>
    <scope>INTERACTION WITH RANGAP1; WPP1 AND WPP2</scope>
</reference>
<reference key="5">
    <citation type="journal article" date="2009" name="Plant Physiol.">
        <title>Large-scale Arabidopsis phosphoproteome profiling reveals novel chloroplast kinase substrates and phosphorylation networks.</title>
        <authorList>
            <person name="Reiland S."/>
            <person name="Messerli G."/>
            <person name="Baerenfaller K."/>
            <person name="Gerrits B."/>
            <person name="Endler A."/>
            <person name="Grossmann J."/>
            <person name="Gruissem W."/>
            <person name="Baginsky S."/>
        </authorList>
    </citation>
    <scope>IDENTIFICATION BY MASS SPECTROMETRY [LARGE SCALE ANALYSIS]</scope>
</reference>
<reference key="6">
    <citation type="journal article" date="2012" name="J. Cell Biol.">
        <title>Novel plant SUN-KASH bridges are involved in RanGAP anchoring and nuclear shape determination.</title>
        <authorList>
            <person name="Zhou X."/>
            <person name="Graumann K."/>
            <person name="Evans D.E."/>
            <person name="Meier I."/>
        </authorList>
    </citation>
    <scope>INTERACTION WITH SUN1 AND SUN2</scope>
    <scope>SUBCELLULAR LOCATION</scope>
    <source>
        <strain>cv. Columbia</strain>
    </source>
</reference>
<reference key="7">
    <citation type="journal article" date="2015" name="J. Exp. Bot.">
        <title>The plant nuclear envelope as a multifunctional platform LINCed by SUN and KASH.</title>
        <authorList>
            <person name="Zhou X."/>
            <person name="Graumann K."/>
            <person name="Meier I."/>
        </authorList>
    </citation>
    <scope>REVIEW</scope>
</reference>
<reference key="8">
    <citation type="journal article" date="2015" name="Nucleus">
        <title>Plant nuclear shape is independently determined by the SUN-WIP-WIT2-myosin XI-i complex and CRWN1.</title>
        <authorList>
            <person name="Zhou X."/>
            <person name="Groves N.R."/>
            <person name="Meier I."/>
        </authorList>
    </citation>
    <scope>FUNCTION</scope>
    <scope>INTERACTION WITH WIT2</scope>
    <scope>SUBUNIT</scope>
</reference>